<keyword id="KW-0227">DNA damage</keyword>
<keyword id="KW-0233">DNA recombination</keyword>
<keyword id="KW-0234">DNA repair</keyword>
<keyword id="KW-0539">Nucleus</keyword>
<keyword id="KW-0597">Phosphoprotein</keyword>
<keyword id="KW-1185">Reference proteome</keyword>
<dbReference type="EMBL" id="DS995903">
    <property type="protein sequence ID" value="EEA21801.1"/>
    <property type="molecule type" value="Genomic_DNA"/>
</dbReference>
<dbReference type="RefSeq" id="XP_002150410.1">
    <property type="nucleotide sequence ID" value="XM_002150374.1"/>
</dbReference>
<dbReference type="SMR" id="B6QL24"/>
<dbReference type="STRING" id="441960.B6QL24"/>
<dbReference type="VEuPathDB" id="FungiDB:PMAA_055930"/>
<dbReference type="HOGENOM" id="CLU_016773_0_0_1"/>
<dbReference type="OrthoDB" id="14584at28568"/>
<dbReference type="PhylomeDB" id="B6QL24"/>
<dbReference type="Proteomes" id="UP000001294">
    <property type="component" value="Unassembled WGS sequence"/>
</dbReference>
<dbReference type="GO" id="GO:0033557">
    <property type="term" value="C:Slx1-Slx4 complex"/>
    <property type="evidence" value="ECO:0007669"/>
    <property type="project" value="UniProtKB-UniRule"/>
</dbReference>
<dbReference type="GO" id="GO:0017108">
    <property type="term" value="F:5'-flap endonuclease activity"/>
    <property type="evidence" value="ECO:0007669"/>
    <property type="project" value="InterPro"/>
</dbReference>
<dbReference type="GO" id="GO:0006310">
    <property type="term" value="P:DNA recombination"/>
    <property type="evidence" value="ECO:0007669"/>
    <property type="project" value="UniProtKB-UniRule"/>
</dbReference>
<dbReference type="GO" id="GO:0006281">
    <property type="term" value="P:DNA repair"/>
    <property type="evidence" value="ECO:0007669"/>
    <property type="project" value="UniProtKB-UniRule"/>
</dbReference>
<dbReference type="GO" id="GO:0006260">
    <property type="term" value="P:DNA replication"/>
    <property type="evidence" value="ECO:0007669"/>
    <property type="project" value="InterPro"/>
</dbReference>
<dbReference type="CDD" id="cd22999">
    <property type="entry name" value="SAP_SLX4"/>
    <property type="match status" value="1"/>
</dbReference>
<dbReference type="HAMAP" id="MF_03110">
    <property type="entry name" value="Endonuc_su_Slx4"/>
    <property type="match status" value="1"/>
</dbReference>
<dbReference type="InterPro" id="IPR027784">
    <property type="entry name" value="Slx4_ascomycetes"/>
</dbReference>
<dbReference type="InterPro" id="IPR018574">
    <property type="entry name" value="Structure-sp_endonuc_su_Slx4"/>
</dbReference>
<dbReference type="Pfam" id="PF09494">
    <property type="entry name" value="Slx4"/>
    <property type="match status" value="1"/>
</dbReference>
<protein>
    <recommendedName>
        <fullName evidence="1">Structure-specific endonuclease subunit slx4</fullName>
    </recommendedName>
</protein>
<feature type="chain" id="PRO_0000388039" description="Structure-specific endonuclease subunit slx4">
    <location>
        <begin position="1"/>
        <end position="792"/>
    </location>
</feature>
<feature type="region of interest" description="Disordered" evidence="2">
    <location>
        <begin position="59"/>
        <end position="173"/>
    </location>
</feature>
<feature type="region of interest" description="Disordered" evidence="2">
    <location>
        <begin position="254"/>
        <end position="287"/>
    </location>
</feature>
<feature type="region of interest" description="Disordered" evidence="2">
    <location>
        <begin position="484"/>
        <end position="523"/>
    </location>
</feature>
<feature type="region of interest" description="Disordered" evidence="2">
    <location>
        <begin position="593"/>
        <end position="697"/>
    </location>
</feature>
<feature type="compositionally biased region" description="Low complexity" evidence="2">
    <location>
        <begin position="77"/>
        <end position="88"/>
    </location>
</feature>
<feature type="compositionally biased region" description="Polar residues" evidence="2">
    <location>
        <begin position="92"/>
        <end position="104"/>
    </location>
</feature>
<feature type="compositionally biased region" description="Basic and acidic residues" evidence="2">
    <location>
        <begin position="158"/>
        <end position="173"/>
    </location>
</feature>
<feature type="compositionally biased region" description="Basic and acidic residues" evidence="2">
    <location>
        <begin position="258"/>
        <end position="275"/>
    </location>
</feature>
<feature type="compositionally biased region" description="Basic residues" evidence="2">
    <location>
        <begin position="276"/>
        <end position="287"/>
    </location>
</feature>
<feature type="compositionally biased region" description="Basic and acidic residues" evidence="2">
    <location>
        <begin position="601"/>
        <end position="613"/>
    </location>
</feature>
<feature type="compositionally biased region" description="Basic and acidic residues" evidence="2">
    <location>
        <begin position="621"/>
        <end position="635"/>
    </location>
</feature>
<feature type="compositionally biased region" description="Acidic residues" evidence="2">
    <location>
        <begin position="650"/>
        <end position="659"/>
    </location>
</feature>
<feature type="compositionally biased region" description="Polar residues" evidence="2">
    <location>
        <begin position="669"/>
        <end position="679"/>
    </location>
</feature>
<reference key="1">
    <citation type="journal article" date="2015" name="Genome Announc.">
        <title>Genome sequence of the AIDS-associated pathogen Penicillium marneffei (ATCC18224) and its near taxonomic relative Talaromyces stipitatus (ATCC10500).</title>
        <authorList>
            <person name="Nierman W.C."/>
            <person name="Fedorova-Abrams N.D."/>
            <person name="Andrianopoulos A."/>
        </authorList>
    </citation>
    <scope>NUCLEOTIDE SEQUENCE [LARGE SCALE GENOMIC DNA]</scope>
    <source>
        <strain>ATCC 18224 / CBS 334.59 / QM 7333</strain>
    </source>
</reference>
<comment type="function">
    <text evidence="1">Regulatory subunit of the slx1-slx4 structure-specific endonuclease that resolves DNA secondary structures generated during DNA repair and recombination. Has endonuclease activity towards branched DNA substrates, introducing single-strand cuts in duplex DNA close to junctions with ss-DNA.</text>
</comment>
<comment type="subunit">
    <text evidence="1">Forms a heterodimer with slx1.</text>
</comment>
<comment type="subcellular location">
    <subcellularLocation>
        <location evidence="1">Nucleus</location>
    </subcellularLocation>
</comment>
<comment type="PTM">
    <text evidence="1">Phosphorylated in response to DNA damage.</text>
</comment>
<comment type="similarity">
    <text evidence="1">Belongs to the SLX4 family.</text>
</comment>
<proteinExistence type="inferred from homology"/>
<organism>
    <name type="scientific">Talaromyces marneffei (strain ATCC 18224 / CBS 334.59 / QM 7333)</name>
    <name type="common">Penicillium marneffei</name>
    <dbReference type="NCBI Taxonomy" id="441960"/>
    <lineage>
        <taxon>Eukaryota</taxon>
        <taxon>Fungi</taxon>
        <taxon>Dikarya</taxon>
        <taxon>Ascomycota</taxon>
        <taxon>Pezizomycotina</taxon>
        <taxon>Eurotiomycetes</taxon>
        <taxon>Eurotiomycetidae</taxon>
        <taxon>Eurotiales</taxon>
        <taxon>Trichocomaceae</taxon>
        <taxon>Talaromyces</taxon>
        <taxon>Talaromyces sect. Talaromyces</taxon>
    </lineage>
</organism>
<gene>
    <name type="primary">slx4</name>
    <name type="ORF">PMAA_055930</name>
</gene>
<sequence length="792" mass="86858">MASKFDNTIVIPASSPEQNWARSVSPCTPSRLFGLSPLSPSPPSLLSPSKLFDEVRLKMQNDQPSPKSPLGKVSKKATAPITTAGTPIVSEHFTQTARSGSSKAKTIRNRKSSKSQEGQNKILTGRVAKATATSKAKDTTGSKLNAGTKKTKTTSNSQDDKPTKEAETKKVVDSEGLNLEEALKRRSDWTPPKASVPAIISLDEDSPSGNCGAKTSFGYSLRDYHYSRDNSVSEAILPRKEGNPTKRRRLELVESEILQERKPLQQRQTKDAEKTRKTKAKPKKHPKTITARMTALYEPIDETEGLFVFDEELEAGEDFKKPAKPKKKTSTKQKEPDCVILSPAAATKSLNDQNFLFGTCSQLERDDSPTFFEETQKAIRLSENLTLENPALSTISTVPSTTSIVIKYTSKKSHWSEAARDFHGAVVQPEIIDMTDSPTIDTALSQLSEMNREAPKMASLVSAKPTSGIKPLTEKEIIPSCRPTADIQSTSSKPKSNKIGPDIVGKKAEPSTKKPTNQLPEMPNFNGYTDVELRKKVKSYGLKAIGRRKRLIALLDKCWQSKHGNVATSADDVETSSLAAINGTASVSTARISDTQVSEELPVRKKSDGESKAASRAGKRKVVEKPAARKDETAAKKAASPIRTSSYMVDEIEDSEEEIIPSPTRIRVQRQSSTRQTTPAIGCLPLGSKSKRPSTKNKASTFDECTLIELQSSIARAIRLQTRPKNLLTNGSCPPQLTWHEKILLYEPIILEDFATWLNTEGFALVSEDREVGVALVRTWCESQGICCTFRA</sequence>
<accession>B6QL24</accession>
<evidence type="ECO:0000255" key="1">
    <source>
        <dbReference type="HAMAP-Rule" id="MF_03110"/>
    </source>
</evidence>
<evidence type="ECO:0000256" key="2">
    <source>
        <dbReference type="SAM" id="MobiDB-lite"/>
    </source>
</evidence>
<name>SLX4_TALMQ</name>